<feature type="chain" id="PRO_0000258620" description="HTH-type transcriptional regulator ArgP">
    <location>
        <begin position="1"/>
        <end position="302"/>
    </location>
</feature>
<feature type="domain" description="HTH lysR-type" evidence="1">
    <location>
        <begin position="4"/>
        <end position="60"/>
    </location>
</feature>
<feature type="DNA-binding region" description="H-T-H motif" evidence="1">
    <location>
        <begin position="21"/>
        <end position="40"/>
    </location>
</feature>
<keyword id="KW-0238">DNA-binding</keyword>
<keyword id="KW-0804">Transcription</keyword>
<keyword id="KW-0805">Transcription regulation</keyword>
<evidence type="ECO:0000255" key="1">
    <source>
        <dbReference type="HAMAP-Rule" id="MF_00513"/>
    </source>
</evidence>
<evidence type="ECO:0000305" key="2"/>
<reference key="1">
    <citation type="journal article" date="2004" name="Proc. Natl. Acad. Sci. U.S.A.">
        <title>Insights into the evolution of Yersinia pestis through whole-genome comparison with Yersinia pseudotuberculosis.</title>
        <authorList>
            <person name="Chain P.S.G."/>
            <person name="Carniel E."/>
            <person name="Larimer F.W."/>
            <person name="Lamerdin J."/>
            <person name="Stoutland P.O."/>
            <person name="Regala W.M."/>
            <person name="Georgescu A.M."/>
            <person name="Vergez L.M."/>
            <person name="Land M.L."/>
            <person name="Motin V.L."/>
            <person name="Brubaker R.R."/>
            <person name="Fowler J."/>
            <person name="Hinnebusch J."/>
            <person name="Marceau M."/>
            <person name="Medigue C."/>
            <person name="Simonet M."/>
            <person name="Chenal-Francisque V."/>
            <person name="Souza B."/>
            <person name="Dacheux D."/>
            <person name="Elliott J.M."/>
            <person name="Derbise A."/>
            <person name="Hauser L.J."/>
            <person name="Garcia E."/>
        </authorList>
    </citation>
    <scope>NUCLEOTIDE SEQUENCE [LARGE SCALE GENOMIC DNA]</scope>
    <source>
        <strain>IP32953</strain>
    </source>
</reference>
<accession>Q666Q6</accession>
<organism>
    <name type="scientific">Yersinia pseudotuberculosis serotype I (strain IP32953)</name>
    <dbReference type="NCBI Taxonomy" id="273123"/>
    <lineage>
        <taxon>Bacteria</taxon>
        <taxon>Pseudomonadati</taxon>
        <taxon>Pseudomonadota</taxon>
        <taxon>Gammaproteobacteria</taxon>
        <taxon>Enterobacterales</taxon>
        <taxon>Yersiniaceae</taxon>
        <taxon>Yersinia</taxon>
    </lineage>
</organism>
<name>ARGP_YERPS</name>
<comment type="function">
    <text evidence="1">Controls the transcription of genes involved in arginine and lysine metabolism.</text>
</comment>
<comment type="subunit">
    <text evidence="1">Homodimer.</text>
</comment>
<comment type="similarity">
    <text evidence="2">Belongs to the LysR transcriptional regulatory family.</text>
</comment>
<gene>
    <name evidence="1" type="primary">argP</name>
    <name type="synonym">iciA</name>
    <name type="ordered locus">YPTB3191</name>
</gene>
<proteinExistence type="inferred from homology"/>
<sequence>MKRPDYRTLQALDAVIRERGFERAAQKLCITQSAVSQRIKQLENLFGQPLLVRTVPPRPTEQGQKLLALLHQVELLEEEWLGNDNGVDTPLLLSLAVNADSLATWLLPALKPVLADLPIRLNLQVEDETRTQERLRRGEVVGAVSIQPQPLPSCLVDQLGALDYLFVASKAFAERYFPNGVTRSALLKAPAVAFDHLDDMHQAFLQQNFDLSPGSVPCHIVNSSEAFVQLARQGTTCCMIPHLQIEKELASGELIDLTPGLLQRRMLFWHRFAPESRTMRKVTDALLSYGRQVLRQDSFIGQ</sequence>
<dbReference type="EMBL" id="BX936398">
    <property type="protein sequence ID" value="CAH22429.1"/>
    <property type="molecule type" value="Genomic_DNA"/>
</dbReference>
<dbReference type="RefSeq" id="WP_002209958.1">
    <property type="nucleotide sequence ID" value="NZ_CP009712.1"/>
</dbReference>
<dbReference type="SMR" id="Q666Q6"/>
<dbReference type="KEGG" id="ypo:BZ17_3420"/>
<dbReference type="KEGG" id="yps:YPTB3191"/>
<dbReference type="PATRIC" id="fig|273123.14.peg.3589"/>
<dbReference type="Proteomes" id="UP000001011">
    <property type="component" value="Chromosome"/>
</dbReference>
<dbReference type="GO" id="GO:0003677">
    <property type="term" value="F:DNA binding"/>
    <property type="evidence" value="ECO:0007669"/>
    <property type="project" value="UniProtKB-UniRule"/>
</dbReference>
<dbReference type="GO" id="GO:0003700">
    <property type="term" value="F:DNA-binding transcription factor activity"/>
    <property type="evidence" value="ECO:0007669"/>
    <property type="project" value="UniProtKB-UniRule"/>
</dbReference>
<dbReference type="CDD" id="cd08428">
    <property type="entry name" value="PBP2_IciA_ArgP"/>
    <property type="match status" value="1"/>
</dbReference>
<dbReference type="FunFam" id="1.10.10.10:FF:000061">
    <property type="entry name" value="HTH-type transcriptional regulator ArgP"/>
    <property type="match status" value="1"/>
</dbReference>
<dbReference type="FunFam" id="3.40.190.290:FF:000002">
    <property type="entry name" value="HTH-type transcriptional regulator ArgP"/>
    <property type="match status" value="1"/>
</dbReference>
<dbReference type="Gene3D" id="3.40.190.290">
    <property type="match status" value="1"/>
</dbReference>
<dbReference type="Gene3D" id="1.10.10.10">
    <property type="entry name" value="Winged helix-like DNA-binding domain superfamily/Winged helix DNA-binding domain"/>
    <property type="match status" value="1"/>
</dbReference>
<dbReference type="HAMAP" id="MF_00513">
    <property type="entry name" value="HTH_type_ArgP"/>
    <property type="match status" value="1"/>
</dbReference>
<dbReference type="InterPro" id="IPR017685">
    <property type="entry name" value="ArgP"/>
</dbReference>
<dbReference type="InterPro" id="IPR023490">
    <property type="entry name" value="ArgP_gammaproteobact"/>
</dbReference>
<dbReference type="InterPro" id="IPR050176">
    <property type="entry name" value="LTTR"/>
</dbReference>
<dbReference type="InterPro" id="IPR005119">
    <property type="entry name" value="LysR_subst-bd"/>
</dbReference>
<dbReference type="InterPro" id="IPR000847">
    <property type="entry name" value="Tscrpt_reg_HTH_LysR"/>
</dbReference>
<dbReference type="InterPro" id="IPR036388">
    <property type="entry name" value="WH-like_DNA-bd_sf"/>
</dbReference>
<dbReference type="InterPro" id="IPR036390">
    <property type="entry name" value="WH_DNA-bd_sf"/>
</dbReference>
<dbReference type="NCBIfam" id="TIGR03298">
    <property type="entry name" value="argP"/>
    <property type="match status" value="1"/>
</dbReference>
<dbReference type="NCBIfam" id="NF002964">
    <property type="entry name" value="PRK03635.1"/>
    <property type="match status" value="1"/>
</dbReference>
<dbReference type="NCBIfam" id="NF009888">
    <property type="entry name" value="PRK13348.1"/>
    <property type="match status" value="1"/>
</dbReference>
<dbReference type="PANTHER" id="PTHR30579:SF2">
    <property type="entry name" value="HTH-TYPE TRANSCRIPTIONAL REGULATOR ARGP"/>
    <property type="match status" value="1"/>
</dbReference>
<dbReference type="PANTHER" id="PTHR30579">
    <property type="entry name" value="TRANSCRIPTIONAL REGULATOR"/>
    <property type="match status" value="1"/>
</dbReference>
<dbReference type="Pfam" id="PF00126">
    <property type="entry name" value="HTH_1"/>
    <property type="match status" value="1"/>
</dbReference>
<dbReference type="Pfam" id="PF03466">
    <property type="entry name" value="LysR_substrate"/>
    <property type="match status" value="1"/>
</dbReference>
<dbReference type="PRINTS" id="PR00039">
    <property type="entry name" value="HTHLYSR"/>
</dbReference>
<dbReference type="SUPFAM" id="SSF53850">
    <property type="entry name" value="Periplasmic binding protein-like II"/>
    <property type="match status" value="1"/>
</dbReference>
<dbReference type="SUPFAM" id="SSF46785">
    <property type="entry name" value="Winged helix' DNA-binding domain"/>
    <property type="match status" value="1"/>
</dbReference>
<dbReference type="PROSITE" id="PS50931">
    <property type="entry name" value="HTH_LYSR"/>
    <property type="match status" value="1"/>
</dbReference>
<protein>
    <recommendedName>
        <fullName evidence="1">HTH-type transcriptional regulator ArgP</fullName>
    </recommendedName>
</protein>